<protein>
    <recommendedName>
        <fullName evidence="1">tRNA-specific 2-thiouridylase MnmA</fullName>
        <ecNumber evidence="1">2.8.1.13</ecNumber>
    </recommendedName>
</protein>
<dbReference type="EC" id="2.8.1.13" evidence="1"/>
<dbReference type="EMBL" id="CP000891">
    <property type="protein sequence ID" value="ABX49759.1"/>
    <property type="status" value="ALT_INIT"/>
    <property type="molecule type" value="Genomic_DNA"/>
</dbReference>
<dbReference type="RefSeq" id="WP_006086257.1">
    <property type="nucleotide sequence ID" value="NC_009997.1"/>
</dbReference>
<dbReference type="SMR" id="A9L4G9"/>
<dbReference type="GeneID" id="11772687"/>
<dbReference type="KEGG" id="sbn:Sbal195_2591"/>
<dbReference type="HOGENOM" id="CLU_035188_1_0_6"/>
<dbReference type="Proteomes" id="UP000000770">
    <property type="component" value="Chromosome"/>
</dbReference>
<dbReference type="GO" id="GO:0005737">
    <property type="term" value="C:cytoplasm"/>
    <property type="evidence" value="ECO:0007669"/>
    <property type="project" value="UniProtKB-SubCell"/>
</dbReference>
<dbReference type="GO" id="GO:0005524">
    <property type="term" value="F:ATP binding"/>
    <property type="evidence" value="ECO:0007669"/>
    <property type="project" value="UniProtKB-KW"/>
</dbReference>
<dbReference type="GO" id="GO:0000049">
    <property type="term" value="F:tRNA binding"/>
    <property type="evidence" value="ECO:0007669"/>
    <property type="project" value="UniProtKB-KW"/>
</dbReference>
<dbReference type="GO" id="GO:0103016">
    <property type="term" value="F:tRNA-uridine 2-sulfurtransferase activity"/>
    <property type="evidence" value="ECO:0007669"/>
    <property type="project" value="UniProtKB-EC"/>
</dbReference>
<dbReference type="GO" id="GO:0002143">
    <property type="term" value="P:tRNA wobble position uridine thiolation"/>
    <property type="evidence" value="ECO:0007669"/>
    <property type="project" value="TreeGrafter"/>
</dbReference>
<dbReference type="CDD" id="cd01998">
    <property type="entry name" value="MnmA_TRMU-like"/>
    <property type="match status" value="1"/>
</dbReference>
<dbReference type="FunFam" id="2.30.30.280:FF:000001">
    <property type="entry name" value="tRNA-specific 2-thiouridylase MnmA"/>
    <property type="match status" value="1"/>
</dbReference>
<dbReference type="FunFam" id="2.40.30.10:FF:000023">
    <property type="entry name" value="tRNA-specific 2-thiouridylase MnmA"/>
    <property type="match status" value="1"/>
</dbReference>
<dbReference type="FunFam" id="3.40.50.620:FF:000004">
    <property type="entry name" value="tRNA-specific 2-thiouridylase MnmA"/>
    <property type="match status" value="1"/>
</dbReference>
<dbReference type="Gene3D" id="2.30.30.280">
    <property type="entry name" value="Adenine nucleotide alpha hydrolases-like domains"/>
    <property type="match status" value="1"/>
</dbReference>
<dbReference type="Gene3D" id="3.40.50.620">
    <property type="entry name" value="HUPs"/>
    <property type="match status" value="1"/>
</dbReference>
<dbReference type="Gene3D" id="2.40.30.10">
    <property type="entry name" value="Translation factors"/>
    <property type="match status" value="1"/>
</dbReference>
<dbReference type="HAMAP" id="MF_00144">
    <property type="entry name" value="tRNA_thiouridyl_MnmA"/>
    <property type="match status" value="1"/>
</dbReference>
<dbReference type="InterPro" id="IPR004506">
    <property type="entry name" value="MnmA-like"/>
</dbReference>
<dbReference type="InterPro" id="IPR046885">
    <property type="entry name" value="MnmA-like_C"/>
</dbReference>
<dbReference type="InterPro" id="IPR046884">
    <property type="entry name" value="MnmA-like_central"/>
</dbReference>
<dbReference type="InterPro" id="IPR023382">
    <property type="entry name" value="MnmA-like_central_sf"/>
</dbReference>
<dbReference type="InterPro" id="IPR014729">
    <property type="entry name" value="Rossmann-like_a/b/a_fold"/>
</dbReference>
<dbReference type="NCBIfam" id="NF001138">
    <property type="entry name" value="PRK00143.1"/>
    <property type="match status" value="1"/>
</dbReference>
<dbReference type="NCBIfam" id="TIGR00420">
    <property type="entry name" value="trmU"/>
    <property type="match status" value="1"/>
</dbReference>
<dbReference type="PANTHER" id="PTHR11933:SF5">
    <property type="entry name" value="MITOCHONDRIAL TRNA-SPECIFIC 2-THIOURIDYLASE 1"/>
    <property type="match status" value="1"/>
</dbReference>
<dbReference type="PANTHER" id="PTHR11933">
    <property type="entry name" value="TRNA 5-METHYLAMINOMETHYL-2-THIOURIDYLATE -METHYLTRANSFERASE"/>
    <property type="match status" value="1"/>
</dbReference>
<dbReference type="Pfam" id="PF03054">
    <property type="entry name" value="tRNA_Me_trans"/>
    <property type="match status" value="1"/>
</dbReference>
<dbReference type="Pfam" id="PF20258">
    <property type="entry name" value="tRNA_Me_trans_C"/>
    <property type="match status" value="1"/>
</dbReference>
<dbReference type="Pfam" id="PF20259">
    <property type="entry name" value="tRNA_Me_trans_M"/>
    <property type="match status" value="1"/>
</dbReference>
<dbReference type="SUPFAM" id="SSF52402">
    <property type="entry name" value="Adenine nucleotide alpha hydrolases-like"/>
    <property type="match status" value="1"/>
</dbReference>
<organism>
    <name type="scientific">Shewanella baltica (strain OS195)</name>
    <dbReference type="NCBI Taxonomy" id="399599"/>
    <lineage>
        <taxon>Bacteria</taxon>
        <taxon>Pseudomonadati</taxon>
        <taxon>Pseudomonadota</taxon>
        <taxon>Gammaproteobacteria</taxon>
        <taxon>Alteromonadales</taxon>
        <taxon>Shewanellaceae</taxon>
        <taxon>Shewanella</taxon>
    </lineage>
</organism>
<accession>A9L4G9</accession>
<keyword id="KW-0067">ATP-binding</keyword>
<keyword id="KW-0963">Cytoplasm</keyword>
<keyword id="KW-1015">Disulfide bond</keyword>
<keyword id="KW-0547">Nucleotide-binding</keyword>
<keyword id="KW-0694">RNA-binding</keyword>
<keyword id="KW-0808">Transferase</keyword>
<keyword id="KW-0819">tRNA processing</keyword>
<keyword id="KW-0820">tRNA-binding</keyword>
<feature type="chain" id="PRO_0000349791" description="tRNA-specific 2-thiouridylase MnmA">
    <location>
        <begin position="1"/>
        <end position="372"/>
    </location>
</feature>
<feature type="region of interest" description="Interaction with target base in tRNA" evidence="1">
    <location>
        <begin position="102"/>
        <end position="104"/>
    </location>
</feature>
<feature type="region of interest" description="Interaction with tRNA" evidence="1">
    <location>
        <begin position="155"/>
        <end position="157"/>
    </location>
</feature>
<feature type="region of interest" description="Interaction with tRNA" evidence="1">
    <location>
        <begin position="317"/>
        <end position="318"/>
    </location>
</feature>
<feature type="active site" description="Nucleophile" evidence="1">
    <location>
        <position position="107"/>
    </location>
</feature>
<feature type="active site" description="Cysteine persulfide intermediate" evidence="1">
    <location>
        <position position="205"/>
    </location>
</feature>
<feature type="binding site" evidence="1">
    <location>
        <begin position="16"/>
        <end position="23"/>
    </location>
    <ligand>
        <name>ATP</name>
        <dbReference type="ChEBI" id="CHEBI:30616"/>
    </ligand>
</feature>
<feature type="binding site" evidence="1">
    <location>
        <position position="42"/>
    </location>
    <ligand>
        <name>ATP</name>
        <dbReference type="ChEBI" id="CHEBI:30616"/>
    </ligand>
</feature>
<feature type="binding site" evidence="1">
    <location>
        <position position="132"/>
    </location>
    <ligand>
        <name>ATP</name>
        <dbReference type="ChEBI" id="CHEBI:30616"/>
    </ligand>
</feature>
<feature type="site" description="Interaction with tRNA" evidence="1">
    <location>
        <position position="133"/>
    </location>
</feature>
<feature type="site" description="Interaction with tRNA" evidence="1">
    <location>
        <position position="350"/>
    </location>
</feature>
<feature type="disulfide bond" description="Alternate" evidence="1">
    <location>
        <begin position="107"/>
        <end position="205"/>
    </location>
</feature>
<comment type="function">
    <text evidence="1">Catalyzes the 2-thiolation of uridine at the wobble position (U34) of tRNA, leading to the formation of s(2)U34.</text>
</comment>
<comment type="catalytic activity">
    <reaction evidence="1">
        <text>S-sulfanyl-L-cysteinyl-[protein] + uridine(34) in tRNA + AH2 + ATP = 2-thiouridine(34) in tRNA + L-cysteinyl-[protein] + A + AMP + diphosphate + H(+)</text>
        <dbReference type="Rhea" id="RHEA:47032"/>
        <dbReference type="Rhea" id="RHEA-COMP:10131"/>
        <dbReference type="Rhea" id="RHEA-COMP:11726"/>
        <dbReference type="Rhea" id="RHEA-COMP:11727"/>
        <dbReference type="Rhea" id="RHEA-COMP:11728"/>
        <dbReference type="ChEBI" id="CHEBI:13193"/>
        <dbReference type="ChEBI" id="CHEBI:15378"/>
        <dbReference type="ChEBI" id="CHEBI:17499"/>
        <dbReference type="ChEBI" id="CHEBI:29950"/>
        <dbReference type="ChEBI" id="CHEBI:30616"/>
        <dbReference type="ChEBI" id="CHEBI:33019"/>
        <dbReference type="ChEBI" id="CHEBI:61963"/>
        <dbReference type="ChEBI" id="CHEBI:65315"/>
        <dbReference type="ChEBI" id="CHEBI:87170"/>
        <dbReference type="ChEBI" id="CHEBI:456215"/>
        <dbReference type="EC" id="2.8.1.13"/>
    </reaction>
</comment>
<comment type="subcellular location">
    <subcellularLocation>
        <location evidence="1">Cytoplasm</location>
    </subcellularLocation>
</comment>
<comment type="similarity">
    <text evidence="1">Belongs to the MnmA/TRMU family.</text>
</comment>
<comment type="sequence caution" evidence="2">
    <conflict type="erroneous initiation">
        <sequence resource="EMBL-CDS" id="ABX49759"/>
    </conflict>
</comment>
<gene>
    <name evidence="1" type="primary">mnmA</name>
    <name type="ordered locus">Sbal195_2591</name>
</gene>
<name>MNMA_SHEB9</name>
<evidence type="ECO:0000255" key="1">
    <source>
        <dbReference type="HAMAP-Rule" id="MF_00144"/>
    </source>
</evidence>
<evidence type="ECO:0000305" key="2"/>
<reference key="1">
    <citation type="submission" date="2007-11" db="EMBL/GenBank/DDBJ databases">
        <title>Complete sequence of chromosome of Shewanella baltica OS195.</title>
        <authorList>
            <consortium name="US DOE Joint Genome Institute"/>
            <person name="Copeland A."/>
            <person name="Lucas S."/>
            <person name="Lapidus A."/>
            <person name="Barry K."/>
            <person name="Glavina del Rio T."/>
            <person name="Dalin E."/>
            <person name="Tice H."/>
            <person name="Pitluck S."/>
            <person name="Chain P."/>
            <person name="Malfatti S."/>
            <person name="Shin M."/>
            <person name="Vergez L."/>
            <person name="Schmutz J."/>
            <person name="Larimer F."/>
            <person name="Land M."/>
            <person name="Hauser L."/>
            <person name="Kyrpides N."/>
            <person name="Kim E."/>
            <person name="Brettar I."/>
            <person name="Rodrigues J."/>
            <person name="Konstantinidis K."/>
            <person name="Klappenbach J."/>
            <person name="Hofle M."/>
            <person name="Tiedje J."/>
            <person name="Richardson P."/>
        </authorList>
    </citation>
    <scope>NUCLEOTIDE SEQUENCE [LARGE SCALE GENOMIC DNA]</scope>
    <source>
        <strain>OS195</strain>
    </source>
</reference>
<proteinExistence type="inferred from homology"/>
<sequence length="372" mass="41621">MTSIEPTHTGKKVIVGMSGGVDSSVSAYLLMQQGYQVEGLFMKNWEEDDNNEYCAAAEDLKDAQAVCDKLGIKLHTVNFAAEYWDNVFEYFLAEYKAGRTPNPDIMCNKEIKFKAFLEFADEILDADYIAMGHYVRRRDNTDGSTQMLRGVDGNKDQSYFLYTLSHEQVARSLFPVGELEKHEVREIAKEMGLITHDKKDSTGICFIGERKFTEFLGTYLPAQPGNIETPEGEVIGTHQGLMYHTLGQRKGLGIGGMKNSNDDPWYVVDKDLERNVLIVGQGGHHPRLMSTGMTVNQLHWVDRTGPIDGCHIAVKTRYRQQDVPCTLTYTDEHTLRVVFDEPVAAVTPGQSAVFYDGEVCLGGGIIDQLIRG</sequence>